<comment type="function">
    <text evidence="1">Catalyzes the attachment of serine to tRNA(Ser). Is also able to aminoacylate tRNA(Sec) with serine, to form the misacylated tRNA L-seryl-tRNA(Sec), which will be further converted into selenocysteinyl-tRNA(Sec).</text>
</comment>
<comment type="catalytic activity">
    <reaction evidence="1">
        <text>tRNA(Ser) + L-serine + ATP = L-seryl-tRNA(Ser) + AMP + diphosphate + H(+)</text>
        <dbReference type="Rhea" id="RHEA:12292"/>
        <dbReference type="Rhea" id="RHEA-COMP:9669"/>
        <dbReference type="Rhea" id="RHEA-COMP:9703"/>
        <dbReference type="ChEBI" id="CHEBI:15378"/>
        <dbReference type="ChEBI" id="CHEBI:30616"/>
        <dbReference type="ChEBI" id="CHEBI:33019"/>
        <dbReference type="ChEBI" id="CHEBI:33384"/>
        <dbReference type="ChEBI" id="CHEBI:78442"/>
        <dbReference type="ChEBI" id="CHEBI:78533"/>
        <dbReference type="ChEBI" id="CHEBI:456215"/>
        <dbReference type="EC" id="6.1.1.11"/>
    </reaction>
</comment>
<comment type="catalytic activity">
    <reaction evidence="1">
        <text>tRNA(Sec) + L-serine + ATP = L-seryl-tRNA(Sec) + AMP + diphosphate + H(+)</text>
        <dbReference type="Rhea" id="RHEA:42580"/>
        <dbReference type="Rhea" id="RHEA-COMP:9742"/>
        <dbReference type="Rhea" id="RHEA-COMP:10128"/>
        <dbReference type="ChEBI" id="CHEBI:15378"/>
        <dbReference type="ChEBI" id="CHEBI:30616"/>
        <dbReference type="ChEBI" id="CHEBI:33019"/>
        <dbReference type="ChEBI" id="CHEBI:33384"/>
        <dbReference type="ChEBI" id="CHEBI:78442"/>
        <dbReference type="ChEBI" id="CHEBI:78533"/>
        <dbReference type="ChEBI" id="CHEBI:456215"/>
        <dbReference type="EC" id="6.1.1.11"/>
    </reaction>
</comment>
<comment type="pathway">
    <text evidence="1">Aminoacyl-tRNA biosynthesis; selenocysteinyl-tRNA(Sec) biosynthesis; L-seryl-tRNA(Sec) from L-serine and tRNA(Sec): step 1/1.</text>
</comment>
<comment type="subunit">
    <text evidence="1">Homodimer. The tRNA molecule binds across the dimer.</text>
</comment>
<comment type="subcellular location">
    <subcellularLocation>
        <location evidence="1">Cytoplasm</location>
    </subcellularLocation>
</comment>
<comment type="domain">
    <text evidence="1">Consists of two distinct domains, a catalytic core and a N-terminal extension that is involved in tRNA binding.</text>
</comment>
<comment type="similarity">
    <text evidence="1">Belongs to the class-II aminoacyl-tRNA synthetase family. Type-1 seryl-tRNA synthetase subfamily.</text>
</comment>
<name>SYS_SHESR</name>
<organism>
    <name type="scientific">Shewanella sp. (strain MR-7)</name>
    <dbReference type="NCBI Taxonomy" id="60481"/>
    <lineage>
        <taxon>Bacteria</taxon>
        <taxon>Pseudomonadati</taxon>
        <taxon>Pseudomonadota</taxon>
        <taxon>Gammaproteobacteria</taxon>
        <taxon>Alteromonadales</taxon>
        <taxon>Shewanellaceae</taxon>
        <taxon>Shewanella</taxon>
    </lineage>
</organism>
<accession>Q0HV57</accession>
<evidence type="ECO:0000255" key="1">
    <source>
        <dbReference type="HAMAP-Rule" id="MF_00176"/>
    </source>
</evidence>
<gene>
    <name evidence="1" type="primary">serS</name>
    <name type="ordered locus">Shewmr7_2009</name>
</gene>
<proteinExistence type="inferred from homology"/>
<sequence length="428" mass="46869">MLDPKFLRNELAVTAERLATRGFILDVAHLTQLEEKRKSLQVATEELQASRNAISKSIGQAKARGEDVDAIMAQVGDLGAQLDAKKVELAAVLEEVNAIAMSMPNLPDESAPIGADETENVEIRRWGTPRSFDFPVKDHIDLGEGLNGLDFKSAVKITGSRFIVMKGQIARLNRALGQFMLDLHTTEHGYTEAYVPLLVNEASLLGTGQLPKFGEDLFHTKPATEEGQGLSLIPTAEVPLTNLVRDSIVDEDELPIKLTAHTACFRSEAGSYGKDTRGLIRQHQFDKVELVQLVKPEDSMAALEALTGHAETVLQRLGLPYRTVILCTGDMGFGSSKTYDIEVWLPGQNTYREISSCSNMKDFQARRMQARYRVKADNKPALLHTLNGSGLAVGRTLVAILENYQNADGSVTIPEALRPYMGGLTQIG</sequence>
<keyword id="KW-0030">Aminoacyl-tRNA synthetase</keyword>
<keyword id="KW-0067">ATP-binding</keyword>
<keyword id="KW-0963">Cytoplasm</keyword>
<keyword id="KW-0436">Ligase</keyword>
<keyword id="KW-0547">Nucleotide-binding</keyword>
<keyword id="KW-0648">Protein biosynthesis</keyword>
<feature type="chain" id="PRO_1000019817" description="Serine--tRNA ligase">
    <location>
        <begin position="1"/>
        <end position="428"/>
    </location>
</feature>
<feature type="binding site" evidence="1">
    <location>
        <begin position="235"/>
        <end position="237"/>
    </location>
    <ligand>
        <name>L-serine</name>
        <dbReference type="ChEBI" id="CHEBI:33384"/>
    </ligand>
</feature>
<feature type="binding site" evidence="1">
    <location>
        <begin position="266"/>
        <end position="268"/>
    </location>
    <ligand>
        <name>ATP</name>
        <dbReference type="ChEBI" id="CHEBI:30616"/>
    </ligand>
</feature>
<feature type="binding site" evidence="1">
    <location>
        <position position="289"/>
    </location>
    <ligand>
        <name>L-serine</name>
        <dbReference type="ChEBI" id="CHEBI:33384"/>
    </ligand>
</feature>
<feature type="binding site" evidence="1">
    <location>
        <begin position="353"/>
        <end position="356"/>
    </location>
    <ligand>
        <name>ATP</name>
        <dbReference type="ChEBI" id="CHEBI:30616"/>
    </ligand>
</feature>
<feature type="binding site" evidence="1">
    <location>
        <position position="389"/>
    </location>
    <ligand>
        <name>L-serine</name>
        <dbReference type="ChEBI" id="CHEBI:33384"/>
    </ligand>
</feature>
<protein>
    <recommendedName>
        <fullName evidence="1">Serine--tRNA ligase</fullName>
        <ecNumber evidence="1">6.1.1.11</ecNumber>
    </recommendedName>
    <alternativeName>
        <fullName evidence="1">Seryl-tRNA synthetase</fullName>
        <shortName evidence="1">SerRS</shortName>
    </alternativeName>
    <alternativeName>
        <fullName evidence="1">Seryl-tRNA(Ser/Sec) synthetase</fullName>
    </alternativeName>
</protein>
<reference key="1">
    <citation type="submission" date="2006-08" db="EMBL/GenBank/DDBJ databases">
        <title>Complete sequence of chromosome 1 of Shewanella sp. MR-7.</title>
        <authorList>
            <person name="Copeland A."/>
            <person name="Lucas S."/>
            <person name="Lapidus A."/>
            <person name="Barry K."/>
            <person name="Detter J.C."/>
            <person name="Glavina del Rio T."/>
            <person name="Hammon N."/>
            <person name="Israni S."/>
            <person name="Dalin E."/>
            <person name="Tice H."/>
            <person name="Pitluck S."/>
            <person name="Kiss H."/>
            <person name="Brettin T."/>
            <person name="Bruce D."/>
            <person name="Han C."/>
            <person name="Tapia R."/>
            <person name="Gilna P."/>
            <person name="Schmutz J."/>
            <person name="Larimer F."/>
            <person name="Land M."/>
            <person name="Hauser L."/>
            <person name="Kyrpides N."/>
            <person name="Mikhailova N."/>
            <person name="Nealson K."/>
            <person name="Konstantinidis K."/>
            <person name="Klappenbach J."/>
            <person name="Tiedje J."/>
            <person name="Richardson P."/>
        </authorList>
    </citation>
    <scope>NUCLEOTIDE SEQUENCE [LARGE SCALE GENOMIC DNA]</scope>
    <source>
        <strain>MR-7</strain>
    </source>
</reference>
<dbReference type="EC" id="6.1.1.11" evidence="1"/>
<dbReference type="EMBL" id="CP000444">
    <property type="protein sequence ID" value="ABI42998.1"/>
    <property type="molecule type" value="Genomic_DNA"/>
</dbReference>
<dbReference type="SMR" id="Q0HV57"/>
<dbReference type="KEGG" id="shm:Shewmr7_2009"/>
<dbReference type="HOGENOM" id="CLU_023797_1_1_6"/>
<dbReference type="UniPathway" id="UPA00906">
    <property type="reaction ID" value="UER00895"/>
</dbReference>
<dbReference type="GO" id="GO:0005737">
    <property type="term" value="C:cytoplasm"/>
    <property type="evidence" value="ECO:0007669"/>
    <property type="project" value="UniProtKB-SubCell"/>
</dbReference>
<dbReference type="GO" id="GO:0005524">
    <property type="term" value="F:ATP binding"/>
    <property type="evidence" value="ECO:0007669"/>
    <property type="project" value="UniProtKB-UniRule"/>
</dbReference>
<dbReference type="GO" id="GO:0004828">
    <property type="term" value="F:serine-tRNA ligase activity"/>
    <property type="evidence" value="ECO:0007669"/>
    <property type="project" value="UniProtKB-UniRule"/>
</dbReference>
<dbReference type="GO" id="GO:0016260">
    <property type="term" value="P:selenocysteine biosynthetic process"/>
    <property type="evidence" value="ECO:0007669"/>
    <property type="project" value="UniProtKB-UniRule"/>
</dbReference>
<dbReference type="GO" id="GO:0006434">
    <property type="term" value="P:seryl-tRNA aminoacylation"/>
    <property type="evidence" value="ECO:0007669"/>
    <property type="project" value="UniProtKB-UniRule"/>
</dbReference>
<dbReference type="CDD" id="cd00770">
    <property type="entry name" value="SerRS_core"/>
    <property type="match status" value="1"/>
</dbReference>
<dbReference type="Gene3D" id="3.30.930.10">
    <property type="entry name" value="Bira Bifunctional Protein, Domain 2"/>
    <property type="match status" value="1"/>
</dbReference>
<dbReference type="Gene3D" id="1.10.287.40">
    <property type="entry name" value="Serine-tRNA synthetase, tRNA binding domain"/>
    <property type="match status" value="1"/>
</dbReference>
<dbReference type="HAMAP" id="MF_00176">
    <property type="entry name" value="Ser_tRNA_synth_type1"/>
    <property type="match status" value="1"/>
</dbReference>
<dbReference type="InterPro" id="IPR002314">
    <property type="entry name" value="aa-tRNA-synt_IIb"/>
</dbReference>
<dbReference type="InterPro" id="IPR006195">
    <property type="entry name" value="aa-tRNA-synth_II"/>
</dbReference>
<dbReference type="InterPro" id="IPR045864">
    <property type="entry name" value="aa-tRNA-synth_II/BPL/LPL"/>
</dbReference>
<dbReference type="InterPro" id="IPR002317">
    <property type="entry name" value="Ser-tRNA-ligase_type_1"/>
</dbReference>
<dbReference type="InterPro" id="IPR015866">
    <property type="entry name" value="Ser-tRNA-synth_1_N"/>
</dbReference>
<dbReference type="InterPro" id="IPR042103">
    <property type="entry name" value="SerRS_1_N_sf"/>
</dbReference>
<dbReference type="InterPro" id="IPR033729">
    <property type="entry name" value="SerRS_core"/>
</dbReference>
<dbReference type="InterPro" id="IPR010978">
    <property type="entry name" value="tRNA-bd_arm"/>
</dbReference>
<dbReference type="NCBIfam" id="TIGR00414">
    <property type="entry name" value="serS"/>
    <property type="match status" value="1"/>
</dbReference>
<dbReference type="PANTHER" id="PTHR43697:SF1">
    <property type="entry name" value="SERINE--TRNA LIGASE"/>
    <property type="match status" value="1"/>
</dbReference>
<dbReference type="PANTHER" id="PTHR43697">
    <property type="entry name" value="SERYL-TRNA SYNTHETASE"/>
    <property type="match status" value="1"/>
</dbReference>
<dbReference type="Pfam" id="PF02403">
    <property type="entry name" value="Seryl_tRNA_N"/>
    <property type="match status" value="1"/>
</dbReference>
<dbReference type="Pfam" id="PF00587">
    <property type="entry name" value="tRNA-synt_2b"/>
    <property type="match status" value="1"/>
</dbReference>
<dbReference type="PIRSF" id="PIRSF001529">
    <property type="entry name" value="Ser-tRNA-synth_IIa"/>
    <property type="match status" value="1"/>
</dbReference>
<dbReference type="PRINTS" id="PR00981">
    <property type="entry name" value="TRNASYNTHSER"/>
</dbReference>
<dbReference type="SUPFAM" id="SSF55681">
    <property type="entry name" value="Class II aaRS and biotin synthetases"/>
    <property type="match status" value="1"/>
</dbReference>
<dbReference type="SUPFAM" id="SSF46589">
    <property type="entry name" value="tRNA-binding arm"/>
    <property type="match status" value="1"/>
</dbReference>
<dbReference type="PROSITE" id="PS50862">
    <property type="entry name" value="AA_TRNA_LIGASE_II"/>
    <property type="match status" value="1"/>
</dbReference>